<sequence>MKVQSFGERVVLFILNAIIFGRLERNLDDDDMFFLPHSVKEQAKILWRRGAAVGFYTTKMKGRLCGDGTGACYLLPVFDTVFIRRKHWHRGLGTAMLRDFCETFPEDEALGVSCSMSPAMYQAHPGNSEDVSRHARTSQNDRPRQPAPGDGSKERMCGEELEDTKDDPECGVEEEDAGLAGQPPGKLTRSSP</sequence>
<keyword id="KW-1185">Reference proteome</keyword>
<gene>
    <name evidence="4" type="primary">FAM169BP</name>
    <name type="synonym">FAM169B</name>
    <name type="synonym">KIAA0888L</name>
</gene>
<proteinExistence type="evidence at transcript level"/>
<accession>Q8N8A8</accession>
<accession>B5MDL8</accession>
<feature type="chain" id="PRO_0000342879" description="Protein FAM169BP">
    <location>
        <begin position="1"/>
        <end position="192"/>
    </location>
</feature>
<feature type="region of interest" description="Disordered" evidence="1">
    <location>
        <begin position="121"/>
        <end position="192"/>
    </location>
</feature>
<feature type="compositionally biased region" description="Acidic residues" evidence="1">
    <location>
        <begin position="159"/>
        <end position="177"/>
    </location>
</feature>
<feature type="sequence variant" id="VAR_044345" description="In dbSNP:rs12101356." evidence="2">
    <original>S</original>
    <variation>P</variation>
    <location>
        <position position="115"/>
    </location>
</feature>
<feature type="sequence conflict" description="In Ref. 1; BAC04940." evidence="3" ref="1">
    <original>S</original>
    <variation>P</variation>
    <location>
        <position position="117"/>
    </location>
</feature>
<evidence type="ECO:0000256" key="1">
    <source>
        <dbReference type="SAM" id="MobiDB-lite"/>
    </source>
</evidence>
<evidence type="ECO:0000269" key="2">
    <source>
    </source>
</evidence>
<evidence type="ECO:0000305" key="3"/>
<evidence type="ECO:0000312" key="4">
    <source>
        <dbReference type="HGNC" id="HGNC:26835"/>
    </source>
</evidence>
<name>F169B_HUMAN</name>
<organism>
    <name type="scientific">Homo sapiens</name>
    <name type="common">Human</name>
    <dbReference type="NCBI Taxonomy" id="9606"/>
    <lineage>
        <taxon>Eukaryota</taxon>
        <taxon>Metazoa</taxon>
        <taxon>Chordata</taxon>
        <taxon>Craniata</taxon>
        <taxon>Vertebrata</taxon>
        <taxon>Euteleostomi</taxon>
        <taxon>Mammalia</taxon>
        <taxon>Eutheria</taxon>
        <taxon>Euarchontoglires</taxon>
        <taxon>Primates</taxon>
        <taxon>Haplorrhini</taxon>
        <taxon>Catarrhini</taxon>
        <taxon>Hominidae</taxon>
        <taxon>Homo</taxon>
    </lineage>
</organism>
<comment type="similarity">
    <text evidence="3">Belongs to the FAM169 family.</text>
</comment>
<protein>
    <recommendedName>
        <fullName evidence="3">Protein FAM169BP</fullName>
    </recommendedName>
    <alternativeName>
        <fullName evidence="4">FAM169BP pseudogene</fullName>
    </alternativeName>
</protein>
<dbReference type="EMBL" id="AK097062">
    <property type="protein sequence ID" value="BAC04940.1"/>
    <property type="molecule type" value="mRNA"/>
</dbReference>
<dbReference type="EMBL" id="AC103968">
    <property type="status" value="NOT_ANNOTATED_CDS"/>
    <property type="molecule type" value="Genomic_DNA"/>
</dbReference>
<dbReference type="RefSeq" id="NP_872368.2">
    <property type="nucleotide sequence ID" value="NM_182562.2"/>
</dbReference>
<dbReference type="BioGRID" id="129669">
    <property type="interactions" value="3"/>
</dbReference>
<dbReference type="IntAct" id="Q8N8A8">
    <property type="interactions" value="3"/>
</dbReference>
<dbReference type="STRING" id="9606.ENSP00000332615"/>
<dbReference type="PhosphoSitePlus" id="Q8N8A8"/>
<dbReference type="BioMuta" id="FAM169B"/>
<dbReference type="DMDM" id="311033451"/>
<dbReference type="PaxDb" id="9606-ENSP00000453554"/>
<dbReference type="ProteomicsDB" id="72394"/>
<dbReference type="DNASU" id="283777"/>
<dbReference type="UCSC" id="uc002buk.1">
    <property type="organism name" value="human"/>
</dbReference>
<dbReference type="AGR" id="HGNC:26835"/>
<dbReference type="DisGeNET" id="283777"/>
<dbReference type="GeneCards" id="FAM169BP"/>
<dbReference type="HGNC" id="HGNC:26835">
    <property type="gene designation" value="FAM169BP"/>
</dbReference>
<dbReference type="neXtProt" id="NX_Q8N8A8"/>
<dbReference type="eggNOG" id="ENOG502S058">
    <property type="taxonomic scope" value="Eukaryota"/>
</dbReference>
<dbReference type="InParanoid" id="Q8N8A8"/>
<dbReference type="PAN-GO" id="Q8N8A8">
    <property type="GO annotations" value="0 GO annotations based on evolutionary models"/>
</dbReference>
<dbReference type="PhylomeDB" id="Q8N8A8"/>
<dbReference type="PathwayCommons" id="Q8N8A8"/>
<dbReference type="BioGRID-ORCS" id="283777">
    <property type="hits" value="5 hits in 1143 CRISPR screens"/>
</dbReference>
<dbReference type="ChiTaRS" id="FAM169B">
    <property type="organism name" value="human"/>
</dbReference>
<dbReference type="GenomeRNAi" id="283777"/>
<dbReference type="Pharos" id="Q8N8A8">
    <property type="development level" value="Tdark"/>
</dbReference>
<dbReference type="PRO" id="PR:Q8N8A8"/>
<dbReference type="Proteomes" id="UP000005640">
    <property type="component" value="Unplaced"/>
</dbReference>
<dbReference type="RNAct" id="Q8N8A8">
    <property type="molecule type" value="protein"/>
</dbReference>
<dbReference type="InterPro" id="IPR029625">
    <property type="entry name" value="FAM169"/>
</dbReference>
<dbReference type="PANTHER" id="PTHR22442">
    <property type="match status" value="1"/>
</dbReference>
<dbReference type="PANTHER" id="PTHR22442:SF4">
    <property type="entry name" value="PROTEIN FAM169BP"/>
    <property type="match status" value="1"/>
</dbReference>
<reference key="1">
    <citation type="journal article" date="2004" name="Nat. Genet.">
        <title>Complete sequencing and characterization of 21,243 full-length human cDNAs.</title>
        <authorList>
            <person name="Ota T."/>
            <person name="Suzuki Y."/>
            <person name="Nishikawa T."/>
            <person name="Otsuki T."/>
            <person name="Sugiyama T."/>
            <person name="Irie R."/>
            <person name="Wakamatsu A."/>
            <person name="Hayashi K."/>
            <person name="Sato H."/>
            <person name="Nagai K."/>
            <person name="Kimura K."/>
            <person name="Makita H."/>
            <person name="Sekine M."/>
            <person name="Obayashi M."/>
            <person name="Nishi T."/>
            <person name="Shibahara T."/>
            <person name="Tanaka T."/>
            <person name="Ishii S."/>
            <person name="Yamamoto J."/>
            <person name="Saito K."/>
            <person name="Kawai Y."/>
            <person name="Isono Y."/>
            <person name="Nakamura Y."/>
            <person name="Nagahari K."/>
            <person name="Murakami K."/>
            <person name="Yasuda T."/>
            <person name="Iwayanagi T."/>
            <person name="Wagatsuma M."/>
            <person name="Shiratori A."/>
            <person name="Sudo H."/>
            <person name="Hosoiri T."/>
            <person name="Kaku Y."/>
            <person name="Kodaira H."/>
            <person name="Kondo H."/>
            <person name="Sugawara M."/>
            <person name="Takahashi M."/>
            <person name="Kanda K."/>
            <person name="Yokoi T."/>
            <person name="Furuya T."/>
            <person name="Kikkawa E."/>
            <person name="Omura Y."/>
            <person name="Abe K."/>
            <person name="Kamihara K."/>
            <person name="Katsuta N."/>
            <person name="Sato K."/>
            <person name="Tanikawa M."/>
            <person name="Yamazaki M."/>
            <person name="Ninomiya K."/>
            <person name="Ishibashi T."/>
            <person name="Yamashita H."/>
            <person name="Murakawa K."/>
            <person name="Fujimori K."/>
            <person name="Tanai H."/>
            <person name="Kimata M."/>
            <person name="Watanabe M."/>
            <person name="Hiraoka S."/>
            <person name="Chiba Y."/>
            <person name="Ishida S."/>
            <person name="Ono Y."/>
            <person name="Takiguchi S."/>
            <person name="Watanabe S."/>
            <person name="Yosida M."/>
            <person name="Hotuta T."/>
            <person name="Kusano J."/>
            <person name="Kanehori K."/>
            <person name="Takahashi-Fujii A."/>
            <person name="Hara H."/>
            <person name="Tanase T.-O."/>
            <person name="Nomura Y."/>
            <person name="Togiya S."/>
            <person name="Komai F."/>
            <person name="Hara R."/>
            <person name="Takeuchi K."/>
            <person name="Arita M."/>
            <person name="Imose N."/>
            <person name="Musashino K."/>
            <person name="Yuuki H."/>
            <person name="Oshima A."/>
            <person name="Sasaki N."/>
            <person name="Aotsuka S."/>
            <person name="Yoshikawa Y."/>
            <person name="Matsunawa H."/>
            <person name="Ichihara T."/>
            <person name="Shiohata N."/>
            <person name="Sano S."/>
            <person name="Moriya S."/>
            <person name="Momiyama H."/>
            <person name="Satoh N."/>
            <person name="Takami S."/>
            <person name="Terashima Y."/>
            <person name="Suzuki O."/>
            <person name="Nakagawa S."/>
            <person name="Senoh A."/>
            <person name="Mizoguchi H."/>
            <person name="Goto Y."/>
            <person name="Shimizu F."/>
            <person name="Wakebe H."/>
            <person name="Hishigaki H."/>
            <person name="Watanabe T."/>
            <person name="Sugiyama A."/>
            <person name="Takemoto M."/>
            <person name="Kawakami B."/>
            <person name="Yamazaki M."/>
            <person name="Watanabe K."/>
            <person name="Kumagai A."/>
            <person name="Itakura S."/>
            <person name="Fukuzumi Y."/>
            <person name="Fujimori Y."/>
            <person name="Komiyama M."/>
            <person name="Tashiro H."/>
            <person name="Tanigami A."/>
            <person name="Fujiwara T."/>
            <person name="Ono T."/>
            <person name="Yamada K."/>
            <person name="Fujii Y."/>
            <person name="Ozaki K."/>
            <person name="Hirao M."/>
            <person name="Ohmori Y."/>
            <person name="Kawabata A."/>
            <person name="Hikiji T."/>
            <person name="Kobatake N."/>
            <person name="Inagaki H."/>
            <person name="Ikema Y."/>
            <person name="Okamoto S."/>
            <person name="Okitani R."/>
            <person name="Kawakami T."/>
            <person name="Noguchi S."/>
            <person name="Itoh T."/>
            <person name="Shigeta K."/>
            <person name="Senba T."/>
            <person name="Matsumura K."/>
            <person name="Nakajima Y."/>
            <person name="Mizuno T."/>
            <person name="Morinaga M."/>
            <person name="Sasaki M."/>
            <person name="Togashi T."/>
            <person name="Oyama M."/>
            <person name="Hata H."/>
            <person name="Watanabe M."/>
            <person name="Komatsu T."/>
            <person name="Mizushima-Sugano J."/>
            <person name="Satoh T."/>
            <person name="Shirai Y."/>
            <person name="Takahashi Y."/>
            <person name="Nakagawa K."/>
            <person name="Okumura K."/>
            <person name="Nagase T."/>
            <person name="Nomura N."/>
            <person name="Kikuchi H."/>
            <person name="Masuho Y."/>
            <person name="Yamashita R."/>
            <person name="Nakai K."/>
            <person name="Yada T."/>
            <person name="Nakamura Y."/>
            <person name="Ohara O."/>
            <person name="Isogai T."/>
            <person name="Sugano S."/>
        </authorList>
    </citation>
    <scope>NUCLEOTIDE SEQUENCE [LARGE SCALE MRNA]</scope>
    <scope>VARIANT PRO-115</scope>
    <source>
        <tissue>Small intestine</tissue>
    </source>
</reference>
<reference key="2">
    <citation type="journal article" date="2006" name="Nature">
        <title>Analysis of the DNA sequence and duplication history of human chromosome 15.</title>
        <authorList>
            <person name="Zody M.C."/>
            <person name="Garber M."/>
            <person name="Sharpe T."/>
            <person name="Young S.K."/>
            <person name="Rowen L."/>
            <person name="O'Neill K."/>
            <person name="Whittaker C.A."/>
            <person name="Kamal M."/>
            <person name="Chang J.L."/>
            <person name="Cuomo C.A."/>
            <person name="Dewar K."/>
            <person name="FitzGerald M.G."/>
            <person name="Kodira C.D."/>
            <person name="Madan A."/>
            <person name="Qin S."/>
            <person name="Yang X."/>
            <person name="Abbasi N."/>
            <person name="Abouelleil A."/>
            <person name="Arachchi H.M."/>
            <person name="Baradarani L."/>
            <person name="Birditt B."/>
            <person name="Bloom S."/>
            <person name="Bloom T."/>
            <person name="Borowsky M.L."/>
            <person name="Burke J."/>
            <person name="Butler J."/>
            <person name="Cook A."/>
            <person name="DeArellano K."/>
            <person name="DeCaprio D."/>
            <person name="Dorris L. III"/>
            <person name="Dors M."/>
            <person name="Eichler E.E."/>
            <person name="Engels R."/>
            <person name="Fahey J."/>
            <person name="Fleetwood P."/>
            <person name="Friedman C."/>
            <person name="Gearin G."/>
            <person name="Hall J.L."/>
            <person name="Hensley G."/>
            <person name="Johnson E."/>
            <person name="Jones C."/>
            <person name="Kamat A."/>
            <person name="Kaur A."/>
            <person name="Locke D.P."/>
            <person name="Madan A."/>
            <person name="Munson G."/>
            <person name="Jaffe D.B."/>
            <person name="Lui A."/>
            <person name="Macdonald P."/>
            <person name="Mauceli E."/>
            <person name="Naylor J.W."/>
            <person name="Nesbitt R."/>
            <person name="Nicol R."/>
            <person name="O'Leary S.B."/>
            <person name="Ratcliffe A."/>
            <person name="Rounsley S."/>
            <person name="She X."/>
            <person name="Sneddon K.M.B."/>
            <person name="Stewart S."/>
            <person name="Sougnez C."/>
            <person name="Stone S.M."/>
            <person name="Topham K."/>
            <person name="Vincent D."/>
            <person name="Wang S."/>
            <person name="Zimmer A.R."/>
            <person name="Birren B.W."/>
            <person name="Hood L."/>
            <person name="Lander E.S."/>
            <person name="Nusbaum C."/>
        </authorList>
    </citation>
    <scope>NUCLEOTIDE SEQUENCE [LARGE SCALE GENOMIC DNA]</scope>
</reference>